<protein>
    <recommendedName>
        <fullName>SPbeta prophage-derived uncharacterized protein YonJ</fullName>
    </recommendedName>
</protein>
<proteinExistence type="predicted"/>
<keyword id="KW-0175">Coiled coil</keyword>
<keyword id="KW-1185">Reference proteome</keyword>
<sequence>MIDPVQTKRHSDENLKEWKIRICSNKDIYNLNWEEIKELINKETGESKGESAYRKWFNNFIEGVEYQRERSDESNNSLLELELKKVEIMEERKKLQAVKHEIHKNTRVKGRTELLYENVTEAIEKVGTLPPPSFYPLNKNERKRAAVLGFGDEHFGKQFKSNNNEYNEQIYLQRMNQILSETVEYIQKENLDELVVLNGADSVEGMALRVSQLTALQYGFIDQVIKYSRYKAEWLLELSKHVKIKYIHIPSANHTELRLHNTNRSEMPKEDVERIIATYIHDVLKDNERIEVPLYDEGIVDFKLLEFEIVACHGHQIKNKKNAIRDISQMKRKFYDYMYISHFHHGNMLTVGEAATHNIQVIQLPSVMGSDEYSDSLMTGAKAGANLSIYESGKGRIIQYDYILN</sequence>
<organism>
    <name type="scientific">Bacillus subtilis (strain 168)</name>
    <dbReference type="NCBI Taxonomy" id="224308"/>
    <lineage>
        <taxon>Bacteria</taxon>
        <taxon>Bacillati</taxon>
        <taxon>Bacillota</taxon>
        <taxon>Bacilli</taxon>
        <taxon>Bacillales</taxon>
        <taxon>Bacillaceae</taxon>
        <taxon>Bacillus</taxon>
    </lineage>
</organism>
<name>YONJ_BACSU</name>
<gene>
    <name type="primary">yonJ</name>
    <name type="ordered locus">BSU21070</name>
</gene>
<dbReference type="EMBL" id="AL009126">
    <property type="protein sequence ID" value="CAB14025.2"/>
    <property type="molecule type" value="Genomic_DNA"/>
</dbReference>
<dbReference type="RefSeq" id="NP_389990.2">
    <property type="nucleotide sequence ID" value="NC_000964.3"/>
</dbReference>
<dbReference type="RefSeq" id="WP_004399278.1">
    <property type="nucleotide sequence ID" value="NZ_OZ025638.1"/>
</dbReference>
<dbReference type="FunCoup" id="O31948">
    <property type="interactions" value="81"/>
</dbReference>
<dbReference type="STRING" id="224308.BSU21070"/>
<dbReference type="PaxDb" id="224308-BSU21070"/>
<dbReference type="EnsemblBacteria" id="CAB14025">
    <property type="protein sequence ID" value="CAB14025"/>
    <property type="gene ID" value="BSU_21070"/>
</dbReference>
<dbReference type="GeneID" id="939163"/>
<dbReference type="KEGG" id="bsu:BSU21070"/>
<dbReference type="PATRIC" id="fig|224308.179.peg.2301"/>
<dbReference type="eggNOG" id="ENOG50314I5">
    <property type="taxonomic scope" value="Bacteria"/>
</dbReference>
<dbReference type="InParanoid" id="O31948"/>
<dbReference type="OrthoDB" id="1758285at2"/>
<dbReference type="BioCyc" id="BSUB:BSU21070-MONOMER"/>
<dbReference type="Proteomes" id="UP000001570">
    <property type="component" value="Chromosome"/>
</dbReference>
<evidence type="ECO:0000255" key="1"/>
<feature type="chain" id="PRO_0000360543" description="SPbeta prophage-derived uncharacterized protein YonJ">
    <location>
        <begin position="1"/>
        <end position="405"/>
    </location>
</feature>
<feature type="coiled-coil region" evidence="1">
    <location>
        <begin position="72"/>
        <end position="101"/>
    </location>
</feature>
<reference key="1">
    <citation type="journal article" date="1997" name="Nature">
        <title>The complete genome sequence of the Gram-positive bacterium Bacillus subtilis.</title>
        <authorList>
            <person name="Kunst F."/>
            <person name="Ogasawara N."/>
            <person name="Moszer I."/>
            <person name="Albertini A.M."/>
            <person name="Alloni G."/>
            <person name="Azevedo V."/>
            <person name="Bertero M.G."/>
            <person name="Bessieres P."/>
            <person name="Bolotin A."/>
            <person name="Borchert S."/>
            <person name="Borriss R."/>
            <person name="Boursier L."/>
            <person name="Brans A."/>
            <person name="Braun M."/>
            <person name="Brignell S.C."/>
            <person name="Bron S."/>
            <person name="Brouillet S."/>
            <person name="Bruschi C.V."/>
            <person name="Caldwell B."/>
            <person name="Capuano V."/>
            <person name="Carter N.M."/>
            <person name="Choi S.-K."/>
            <person name="Codani J.-J."/>
            <person name="Connerton I.F."/>
            <person name="Cummings N.J."/>
            <person name="Daniel R.A."/>
            <person name="Denizot F."/>
            <person name="Devine K.M."/>
            <person name="Duesterhoeft A."/>
            <person name="Ehrlich S.D."/>
            <person name="Emmerson P.T."/>
            <person name="Entian K.-D."/>
            <person name="Errington J."/>
            <person name="Fabret C."/>
            <person name="Ferrari E."/>
            <person name="Foulger D."/>
            <person name="Fritz C."/>
            <person name="Fujita M."/>
            <person name="Fujita Y."/>
            <person name="Fuma S."/>
            <person name="Galizzi A."/>
            <person name="Galleron N."/>
            <person name="Ghim S.-Y."/>
            <person name="Glaser P."/>
            <person name="Goffeau A."/>
            <person name="Golightly E.J."/>
            <person name="Grandi G."/>
            <person name="Guiseppi G."/>
            <person name="Guy B.J."/>
            <person name="Haga K."/>
            <person name="Haiech J."/>
            <person name="Harwood C.R."/>
            <person name="Henaut A."/>
            <person name="Hilbert H."/>
            <person name="Holsappel S."/>
            <person name="Hosono S."/>
            <person name="Hullo M.-F."/>
            <person name="Itaya M."/>
            <person name="Jones L.-M."/>
            <person name="Joris B."/>
            <person name="Karamata D."/>
            <person name="Kasahara Y."/>
            <person name="Klaerr-Blanchard M."/>
            <person name="Klein C."/>
            <person name="Kobayashi Y."/>
            <person name="Koetter P."/>
            <person name="Koningstein G."/>
            <person name="Krogh S."/>
            <person name="Kumano M."/>
            <person name="Kurita K."/>
            <person name="Lapidus A."/>
            <person name="Lardinois S."/>
            <person name="Lauber J."/>
            <person name="Lazarevic V."/>
            <person name="Lee S.-M."/>
            <person name="Levine A."/>
            <person name="Liu H."/>
            <person name="Masuda S."/>
            <person name="Mauel C."/>
            <person name="Medigue C."/>
            <person name="Medina N."/>
            <person name="Mellado R.P."/>
            <person name="Mizuno M."/>
            <person name="Moestl D."/>
            <person name="Nakai S."/>
            <person name="Noback M."/>
            <person name="Noone D."/>
            <person name="O'Reilly M."/>
            <person name="Ogawa K."/>
            <person name="Ogiwara A."/>
            <person name="Oudega B."/>
            <person name="Park S.-H."/>
            <person name="Parro V."/>
            <person name="Pohl T.M."/>
            <person name="Portetelle D."/>
            <person name="Porwollik S."/>
            <person name="Prescott A.M."/>
            <person name="Presecan E."/>
            <person name="Pujic P."/>
            <person name="Purnelle B."/>
            <person name="Rapoport G."/>
            <person name="Rey M."/>
            <person name="Reynolds S."/>
            <person name="Rieger M."/>
            <person name="Rivolta C."/>
            <person name="Rocha E."/>
            <person name="Roche B."/>
            <person name="Rose M."/>
            <person name="Sadaie Y."/>
            <person name="Sato T."/>
            <person name="Scanlan E."/>
            <person name="Schleich S."/>
            <person name="Schroeter R."/>
            <person name="Scoffone F."/>
            <person name="Sekiguchi J."/>
            <person name="Sekowska A."/>
            <person name="Seror S.J."/>
            <person name="Serror P."/>
            <person name="Shin B.-S."/>
            <person name="Soldo B."/>
            <person name="Sorokin A."/>
            <person name="Tacconi E."/>
            <person name="Takagi T."/>
            <person name="Takahashi H."/>
            <person name="Takemaru K."/>
            <person name="Takeuchi M."/>
            <person name="Tamakoshi A."/>
            <person name="Tanaka T."/>
            <person name="Terpstra P."/>
            <person name="Tognoni A."/>
            <person name="Tosato V."/>
            <person name="Uchiyama S."/>
            <person name="Vandenbol M."/>
            <person name="Vannier F."/>
            <person name="Vassarotti A."/>
            <person name="Viari A."/>
            <person name="Wambutt R."/>
            <person name="Wedler E."/>
            <person name="Wedler H."/>
            <person name="Weitzenegger T."/>
            <person name="Winters P."/>
            <person name="Wipat A."/>
            <person name="Yamamoto H."/>
            <person name="Yamane K."/>
            <person name="Yasumoto K."/>
            <person name="Yata K."/>
            <person name="Yoshida K."/>
            <person name="Yoshikawa H.-F."/>
            <person name="Zumstein E."/>
            <person name="Yoshikawa H."/>
            <person name="Danchin A."/>
        </authorList>
    </citation>
    <scope>NUCLEOTIDE SEQUENCE [LARGE SCALE GENOMIC DNA]</scope>
    <source>
        <strain>168</strain>
    </source>
</reference>
<reference key="2">
    <citation type="journal article" date="2009" name="Microbiology">
        <title>From a consortium sequence to a unified sequence: the Bacillus subtilis 168 reference genome a decade later.</title>
        <authorList>
            <person name="Barbe V."/>
            <person name="Cruveiller S."/>
            <person name="Kunst F."/>
            <person name="Lenoble P."/>
            <person name="Meurice G."/>
            <person name="Sekowska A."/>
            <person name="Vallenet D."/>
            <person name="Wang T."/>
            <person name="Moszer I."/>
            <person name="Medigue C."/>
            <person name="Danchin A."/>
        </authorList>
    </citation>
    <scope>SEQUENCE REVISION TO 101</scope>
</reference>
<accession>O31948</accession>